<reference key="1">
    <citation type="journal article" date="2006" name="FEBS J.">
        <title>Reconstitution in vitro of the GDP-fucose biosynthetic pathways of Caenorhabditis elegans and Drosophila melanogaster.</title>
        <authorList>
            <person name="Rhomberg S."/>
            <person name="Fuchsluger C."/>
            <person name="Rendic D."/>
            <person name="Paschinger K."/>
            <person name="Jantsch V."/>
            <person name="Kosma P."/>
            <person name="Wilson I.B.H."/>
        </authorList>
    </citation>
    <scope>NUCLEOTIDE SEQUENCE [MRNA]</scope>
    <scope>FUNCTION</scope>
    <scope>CATALYTIC ACTIVITY</scope>
    <scope>COFACTOR</scope>
    <scope>PATHWAY</scope>
    <scope>BIOPHYSICOCHEMICAL PROPERTIES</scope>
</reference>
<reference key="2">
    <citation type="journal article" date="2000" name="Science">
        <title>The genome sequence of Drosophila melanogaster.</title>
        <authorList>
            <person name="Adams M.D."/>
            <person name="Celniker S.E."/>
            <person name="Holt R.A."/>
            <person name="Evans C.A."/>
            <person name="Gocayne J.D."/>
            <person name="Amanatides P.G."/>
            <person name="Scherer S.E."/>
            <person name="Li P.W."/>
            <person name="Hoskins R.A."/>
            <person name="Galle R.F."/>
            <person name="George R.A."/>
            <person name="Lewis S.E."/>
            <person name="Richards S."/>
            <person name="Ashburner M."/>
            <person name="Henderson S.N."/>
            <person name="Sutton G.G."/>
            <person name="Wortman J.R."/>
            <person name="Yandell M.D."/>
            <person name="Zhang Q."/>
            <person name="Chen L.X."/>
            <person name="Brandon R.C."/>
            <person name="Rogers Y.-H.C."/>
            <person name="Blazej R.G."/>
            <person name="Champe M."/>
            <person name="Pfeiffer B.D."/>
            <person name="Wan K.H."/>
            <person name="Doyle C."/>
            <person name="Baxter E.G."/>
            <person name="Helt G."/>
            <person name="Nelson C.R."/>
            <person name="Miklos G.L.G."/>
            <person name="Abril J.F."/>
            <person name="Agbayani A."/>
            <person name="An H.-J."/>
            <person name="Andrews-Pfannkoch C."/>
            <person name="Baldwin D."/>
            <person name="Ballew R.M."/>
            <person name="Basu A."/>
            <person name="Baxendale J."/>
            <person name="Bayraktaroglu L."/>
            <person name="Beasley E.M."/>
            <person name="Beeson K.Y."/>
            <person name="Benos P.V."/>
            <person name="Berman B.P."/>
            <person name="Bhandari D."/>
            <person name="Bolshakov S."/>
            <person name="Borkova D."/>
            <person name="Botchan M.R."/>
            <person name="Bouck J."/>
            <person name="Brokstein P."/>
            <person name="Brottier P."/>
            <person name="Burtis K.C."/>
            <person name="Busam D.A."/>
            <person name="Butler H."/>
            <person name="Cadieu E."/>
            <person name="Center A."/>
            <person name="Chandra I."/>
            <person name="Cherry J.M."/>
            <person name="Cawley S."/>
            <person name="Dahlke C."/>
            <person name="Davenport L.B."/>
            <person name="Davies P."/>
            <person name="de Pablos B."/>
            <person name="Delcher A."/>
            <person name="Deng Z."/>
            <person name="Mays A.D."/>
            <person name="Dew I."/>
            <person name="Dietz S.M."/>
            <person name="Dodson K."/>
            <person name="Doup L.E."/>
            <person name="Downes M."/>
            <person name="Dugan-Rocha S."/>
            <person name="Dunkov B.C."/>
            <person name="Dunn P."/>
            <person name="Durbin K.J."/>
            <person name="Evangelista C.C."/>
            <person name="Ferraz C."/>
            <person name="Ferriera S."/>
            <person name="Fleischmann W."/>
            <person name="Fosler C."/>
            <person name="Gabrielian A.E."/>
            <person name="Garg N.S."/>
            <person name="Gelbart W.M."/>
            <person name="Glasser K."/>
            <person name="Glodek A."/>
            <person name="Gong F."/>
            <person name="Gorrell J.H."/>
            <person name="Gu Z."/>
            <person name="Guan P."/>
            <person name="Harris M."/>
            <person name="Harris N.L."/>
            <person name="Harvey D.A."/>
            <person name="Heiman T.J."/>
            <person name="Hernandez J.R."/>
            <person name="Houck J."/>
            <person name="Hostin D."/>
            <person name="Houston K.A."/>
            <person name="Howland T.J."/>
            <person name="Wei M.-H."/>
            <person name="Ibegwam C."/>
            <person name="Jalali M."/>
            <person name="Kalush F."/>
            <person name="Karpen G.H."/>
            <person name="Ke Z."/>
            <person name="Kennison J.A."/>
            <person name="Ketchum K.A."/>
            <person name="Kimmel B.E."/>
            <person name="Kodira C.D."/>
            <person name="Kraft C.L."/>
            <person name="Kravitz S."/>
            <person name="Kulp D."/>
            <person name="Lai Z."/>
            <person name="Lasko P."/>
            <person name="Lei Y."/>
            <person name="Levitsky A.A."/>
            <person name="Li J.H."/>
            <person name="Li Z."/>
            <person name="Liang Y."/>
            <person name="Lin X."/>
            <person name="Liu X."/>
            <person name="Mattei B."/>
            <person name="McIntosh T.C."/>
            <person name="McLeod M.P."/>
            <person name="McPherson D."/>
            <person name="Merkulov G."/>
            <person name="Milshina N.V."/>
            <person name="Mobarry C."/>
            <person name="Morris J."/>
            <person name="Moshrefi A."/>
            <person name="Mount S.M."/>
            <person name="Moy M."/>
            <person name="Murphy B."/>
            <person name="Murphy L."/>
            <person name="Muzny D.M."/>
            <person name="Nelson D.L."/>
            <person name="Nelson D.R."/>
            <person name="Nelson K.A."/>
            <person name="Nixon K."/>
            <person name="Nusskern D.R."/>
            <person name="Pacleb J.M."/>
            <person name="Palazzolo M."/>
            <person name="Pittman G.S."/>
            <person name="Pan S."/>
            <person name="Pollard J."/>
            <person name="Puri V."/>
            <person name="Reese M.G."/>
            <person name="Reinert K."/>
            <person name="Remington K."/>
            <person name="Saunders R.D.C."/>
            <person name="Scheeler F."/>
            <person name="Shen H."/>
            <person name="Shue B.C."/>
            <person name="Siden-Kiamos I."/>
            <person name="Simpson M."/>
            <person name="Skupski M.P."/>
            <person name="Smith T.J."/>
            <person name="Spier E."/>
            <person name="Spradling A.C."/>
            <person name="Stapleton M."/>
            <person name="Strong R."/>
            <person name="Sun E."/>
            <person name="Svirskas R."/>
            <person name="Tector C."/>
            <person name="Turner R."/>
            <person name="Venter E."/>
            <person name="Wang A.H."/>
            <person name="Wang X."/>
            <person name="Wang Z.-Y."/>
            <person name="Wassarman D.A."/>
            <person name="Weinstock G.M."/>
            <person name="Weissenbach J."/>
            <person name="Williams S.M."/>
            <person name="Woodage T."/>
            <person name="Worley K.C."/>
            <person name="Wu D."/>
            <person name="Yang S."/>
            <person name="Yao Q.A."/>
            <person name="Ye J."/>
            <person name="Yeh R.-F."/>
            <person name="Zaveri J.S."/>
            <person name="Zhan M."/>
            <person name="Zhang G."/>
            <person name="Zhao Q."/>
            <person name="Zheng L."/>
            <person name="Zheng X.H."/>
            <person name="Zhong F.N."/>
            <person name="Zhong W."/>
            <person name="Zhou X."/>
            <person name="Zhu S.C."/>
            <person name="Zhu X."/>
            <person name="Smith H.O."/>
            <person name="Gibbs R.A."/>
            <person name="Myers E.W."/>
            <person name="Rubin G.M."/>
            <person name="Venter J.C."/>
        </authorList>
    </citation>
    <scope>NUCLEOTIDE SEQUENCE [LARGE SCALE GENOMIC DNA]</scope>
    <source>
        <strain>Berkeley</strain>
    </source>
</reference>
<reference key="3">
    <citation type="journal article" date="2002" name="Genome Biol.">
        <title>Annotation of the Drosophila melanogaster euchromatic genome: a systematic review.</title>
        <authorList>
            <person name="Misra S."/>
            <person name="Crosby M.A."/>
            <person name="Mungall C.J."/>
            <person name="Matthews B.B."/>
            <person name="Campbell K.S."/>
            <person name="Hradecky P."/>
            <person name="Huang Y."/>
            <person name="Kaminker J.S."/>
            <person name="Millburn G.H."/>
            <person name="Prochnik S.E."/>
            <person name="Smith C.D."/>
            <person name="Tupy J.L."/>
            <person name="Whitfield E.J."/>
            <person name="Bayraktaroglu L."/>
            <person name="Berman B.P."/>
            <person name="Bettencourt B.R."/>
            <person name="Celniker S.E."/>
            <person name="de Grey A.D.N.J."/>
            <person name="Drysdale R.A."/>
            <person name="Harris N.L."/>
            <person name="Richter J."/>
            <person name="Russo S."/>
            <person name="Schroeder A.J."/>
            <person name="Shu S.Q."/>
            <person name="Stapleton M."/>
            <person name="Yamada C."/>
            <person name="Ashburner M."/>
            <person name="Gelbart W.M."/>
            <person name="Rubin G.M."/>
            <person name="Lewis S.E."/>
        </authorList>
    </citation>
    <scope>GENOME REANNOTATION</scope>
    <source>
        <strain>Berkeley</strain>
    </source>
</reference>
<reference key="4">
    <citation type="journal article" date="2002" name="Genome Biol.">
        <title>A Drosophila full-length cDNA resource.</title>
        <authorList>
            <person name="Stapleton M."/>
            <person name="Carlson J.W."/>
            <person name="Brokstein P."/>
            <person name="Yu C."/>
            <person name="Champe M."/>
            <person name="George R.A."/>
            <person name="Guarin H."/>
            <person name="Kronmiller B."/>
            <person name="Pacleb J.M."/>
            <person name="Park S."/>
            <person name="Wan K.H."/>
            <person name="Rubin G.M."/>
            <person name="Celniker S.E."/>
        </authorList>
    </citation>
    <scope>NUCLEOTIDE SEQUENCE [LARGE SCALE MRNA]</scope>
    <source>
        <strain>Berkeley</strain>
        <tissue>Ovary</tissue>
    </source>
</reference>
<reference key="5">
    <citation type="journal article" date="2002" name="J. Biol. Chem.">
        <title>Composition of Drosophila melanogaster proteome involved in fucosylated glycan metabolism.</title>
        <authorList>
            <person name="Roos C."/>
            <person name="Kolmer M."/>
            <person name="Mattila P."/>
            <person name="Renkonen R."/>
        </authorList>
    </citation>
    <scope>HOMOLOGY</scope>
</reference>
<accession>Q9VMW9</accession>
<accession>Q1H8X2</accession>
<accession>Q8T3U5</accession>
<keyword id="KW-0456">Lyase</keyword>
<keyword id="KW-0521">NADP</keyword>
<keyword id="KW-1185">Reference proteome</keyword>
<protein>
    <recommendedName>
        <fullName>GDP-mannose 4,6 dehydratase</fullName>
        <ecNumber evidence="6">4.2.1.47</ecNumber>
    </recommendedName>
    <alternativeName>
        <fullName>GDP-D-mannose dehydratase</fullName>
        <shortName>Dm-gmd</shortName>
    </alternativeName>
    <alternativeName>
        <fullName evidence="4">GDP-mannose dehydratase</fullName>
    </alternativeName>
</protein>
<proteinExistence type="evidence at protein level"/>
<organism>
    <name type="scientific">Drosophila melanogaster</name>
    <name type="common">Fruit fly</name>
    <dbReference type="NCBI Taxonomy" id="7227"/>
    <lineage>
        <taxon>Eukaryota</taxon>
        <taxon>Metazoa</taxon>
        <taxon>Ecdysozoa</taxon>
        <taxon>Arthropoda</taxon>
        <taxon>Hexapoda</taxon>
        <taxon>Insecta</taxon>
        <taxon>Pterygota</taxon>
        <taxon>Neoptera</taxon>
        <taxon>Endopterygota</taxon>
        <taxon>Diptera</taxon>
        <taxon>Brachycera</taxon>
        <taxon>Muscomorpha</taxon>
        <taxon>Ephydroidea</taxon>
        <taxon>Drosophilidae</taxon>
        <taxon>Drosophila</taxon>
        <taxon>Sophophora</taxon>
    </lineage>
</organism>
<comment type="function">
    <text evidence="3">Catalyzes the conversion of GDP-D-mannose to GDP-4-dehydro-6-deoxy-D-mannose (also known as GDP-4-keto-6-deoxy-D-mannose or GDP-4-dehydro-alpha-D-rhamnose), an essential step in the synthesis of GDP-fucose from GDP-mannose.</text>
</comment>
<comment type="catalytic activity">
    <reaction evidence="6">
        <text>GDP-alpha-D-mannose = GDP-4-dehydro-alpha-D-rhamnose + H2O</text>
        <dbReference type="Rhea" id="RHEA:23820"/>
        <dbReference type="ChEBI" id="CHEBI:15377"/>
        <dbReference type="ChEBI" id="CHEBI:57527"/>
        <dbReference type="ChEBI" id="CHEBI:57964"/>
        <dbReference type="EC" id="4.2.1.47"/>
    </reaction>
    <physiologicalReaction direction="left-to-right" evidence="6">
        <dbReference type="Rhea" id="RHEA:23821"/>
    </physiologicalReaction>
</comment>
<comment type="cofactor">
    <cofactor evidence="3">
        <name>NADP(+)</name>
        <dbReference type="ChEBI" id="CHEBI:58349"/>
    </cofactor>
</comment>
<comment type="biophysicochemical properties">
    <phDependence>
        <text evidence="3">Optimum pH is 5-8.</text>
    </phDependence>
    <temperatureDependence>
        <text evidence="3">Optimum temperature is 30 degrees Celsius.</text>
    </temperatureDependence>
</comment>
<comment type="pathway">
    <text evidence="3">Nucleotide-sugar biosynthesis; GDP-L-fucose biosynthesis via de novo pathway; GDP-L-fucose from GDP-alpha-D-mannose: step 1/2.</text>
</comment>
<comment type="similarity">
    <text evidence="5">Belongs to the NAD(P)-dependent epimerase/dehydratase family. GDP-mannose 4,6-dehydratase subfamily.</text>
</comment>
<name>GMDS_DROME</name>
<gene>
    <name type="primary">Gmd</name>
    <name type="ORF">CG8890</name>
</gene>
<sequence length="395" mass="44784">MLNTRLIAMSTSDGAPETKKQRPESSSNGSKDQNGTEAGAEGDSRDKVALITGITGQDGSYLAEFLLKKDYEVHGIIRRASTFNTTRIEHLYADPKAHKGGRMKLHYGDMTDSSSLVKIINMVKPTEIYNLAAQSHVKVSFDLSEYTAEVDAVGTLRILDAIRTCGMEKNVRFYQASTSELYGKVVETPQNEQTPFYPRSPYACAKMYGFWIVINYREAYNMYACNGILFNHESPRRGENFVTRKITRSVAKIYHKQMEYFELGNLDSKRDWGHASDYVEAMWMMLQRESPSDYVIATGETHSVREFVEAAFKHIDREITWKGKGVDEVGVENGTGIVRVRINPKYFRPTEVDLLQGDASKANRELNWTPKVTFVELVSDMMKADIELMRKNPIA</sequence>
<dbReference type="EC" id="4.2.1.47" evidence="6"/>
<dbReference type="EMBL" id="AM231687">
    <property type="protein sequence ID" value="CAJ77750.1"/>
    <property type="molecule type" value="mRNA"/>
</dbReference>
<dbReference type="EMBL" id="AE014134">
    <property type="protein sequence ID" value="AAF52189.2"/>
    <property type="molecule type" value="Genomic_DNA"/>
</dbReference>
<dbReference type="EMBL" id="AY089519">
    <property type="protein sequence ID" value="AAL90257.1"/>
    <property type="molecule type" value="mRNA"/>
</dbReference>
<dbReference type="RefSeq" id="NP_608888.2">
    <property type="nucleotide sequence ID" value="NM_135044.4"/>
</dbReference>
<dbReference type="SMR" id="Q9VMW9"/>
<dbReference type="BioGRID" id="59900">
    <property type="interactions" value="4"/>
</dbReference>
<dbReference type="FunCoup" id="Q9VMW9">
    <property type="interactions" value="548"/>
</dbReference>
<dbReference type="IntAct" id="Q9VMW9">
    <property type="interactions" value="10"/>
</dbReference>
<dbReference type="STRING" id="7227.FBpp0078685"/>
<dbReference type="PaxDb" id="7227-FBpp0078685"/>
<dbReference type="DNASU" id="33716"/>
<dbReference type="EnsemblMetazoa" id="FBtr0079049">
    <property type="protein sequence ID" value="FBpp0078685"/>
    <property type="gene ID" value="FBgn0031661"/>
</dbReference>
<dbReference type="GeneID" id="33716"/>
<dbReference type="KEGG" id="dme:Dmel_CG8890"/>
<dbReference type="AGR" id="FB:FBgn0031661"/>
<dbReference type="CTD" id="33716"/>
<dbReference type="FlyBase" id="FBgn0031661">
    <property type="gene designation" value="Gmd"/>
</dbReference>
<dbReference type="VEuPathDB" id="VectorBase:FBgn0031661"/>
<dbReference type="eggNOG" id="KOG1372">
    <property type="taxonomic scope" value="Eukaryota"/>
</dbReference>
<dbReference type="GeneTree" id="ENSGT00440000033640"/>
<dbReference type="HOGENOM" id="CLU_007383_14_0_1"/>
<dbReference type="InParanoid" id="Q9VMW9"/>
<dbReference type="OMA" id="HWQTVNY"/>
<dbReference type="OrthoDB" id="10253554at2759"/>
<dbReference type="PhylomeDB" id="Q9VMW9"/>
<dbReference type="Reactome" id="R-DME-6787639">
    <property type="pathway name" value="GDP-fucose biosynthesis"/>
</dbReference>
<dbReference type="UniPathway" id="UPA00128">
    <property type="reaction ID" value="UER00190"/>
</dbReference>
<dbReference type="BioGRID-ORCS" id="33716">
    <property type="hits" value="0 hits in 1 CRISPR screen"/>
</dbReference>
<dbReference type="GenomeRNAi" id="33716"/>
<dbReference type="PRO" id="PR:Q9VMW9"/>
<dbReference type="Proteomes" id="UP000000803">
    <property type="component" value="Chromosome 2L"/>
</dbReference>
<dbReference type="Bgee" id="FBgn0031661">
    <property type="expression patterns" value="Expressed in embryonic/larval hemocyte (Drosophila) and 68 other cell types or tissues"/>
</dbReference>
<dbReference type="ExpressionAtlas" id="Q9VMW9">
    <property type="expression patterns" value="baseline and differential"/>
</dbReference>
<dbReference type="GO" id="GO:0008446">
    <property type="term" value="F:GDP-mannose 4,6-dehydratase activity"/>
    <property type="evidence" value="ECO:0000314"/>
    <property type="project" value="FlyBase"/>
</dbReference>
<dbReference type="GO" id="GO:0042351">
    <property type="term" value="P:'de novo' GDP-L-fucose biosynthetic process"/>
    <property type="evidence" value="ECO:0000314"/>
    <property type="project" value="FlyBase"/>
</dbReference>
<dbReference type="GO" id="GO:0045165">
    <property type="term" value="P:cell fate commitment"/>
    <property type="evidence" value="ECO:0000315"/>
    <property type="project" value="FlyBase"/>
</dbReference>
<dbReference type="GO" id="GO:0048477">
    <property type="term" value="P:oogenesis"/>
    <property type="evidence" value="ECO:0000315"/>
    <property type="project" value="FlyBase"/>
</dbReference>
<dbReference type="GO" id="GO:0045747">
    <property type="term" value="P:positive regulation of Notch signaling pathway"/>
    <property type="evidence" value="ECO:0000315"/>
    <property type="project" value="FlyBase"/>
</dbReference>
<dbReference type="CDD" id="cd05260">
    <property type="entry name" value="GDP_MD_SDR_e"/>
    <property type="match status" value="1"/>
</dbReference>
<dbReference type="FunFam" id="3.40.50.720:FF:001053">
    <property type="entry name" value="GDP-mannose 4,6 dehydratase"/>
    <property type="match status" value="1"/>
</dbReference>
<dbReference type="Gene3D" id="3.40.50.720">
    <property type="entry name" value="NAD(P)-binding Rossmann-like Domain"/>
    <property type="match status" value="1"/>
</dbReference>
<dbReference type="Gene3D" id="3.90.25.10">
    <property type="entry name" value="UDP-galactose 4-epimerase, domain 1"/>
    <property type="match status" value="1"/>
</dbReference>
<dbReference type="HAMAP" id="MF_00955">
    <property type="entry name" value="GDP_Man_dehydratase"/>
    <property type="match status" value="1"/>
</dbReference>
<dbReference type="InterPro" id="IPR006368">
    <property type="entry name" value="GDP_Man_deHydtase"/>
</dbReference>
<dbReference type="InterPro" id="IPR016040">
    <property type="entry name" value="NAD(P)-bd_dom"/>
</dbReference>
<dbReference type="InterPro" id="IPR036291">
    <property type="entry name" value="NAD(P)-bd_dom_sf"/>
</dbReference>
<dbReference type="NCBIfam" id="TIGR01472">
    <property type="entry name" value="gmd"/>
    <property type="match status" value="1"/>
</dbReference>
<dbReference type="PANTHER" id="PTHR43715:SF1">
    <property type="entry name" value="GDP-MANNOSE 4,6 DEHYDRATASE"/>
    <property type="match status" value="1"/>
</dbReference>
<dbReference type="PANTHER" id="PTHR43715">
    <property type="entry name" value="GDP-MANNOSE 4,6-DEHYDRATASE"/>
    <property type="match status" value="1"/>
</dbReference>
<dbReference type="Pfam" id="PF16363">
    <property type="entry name" value="GDP_Man_Dehyd"/>
    <property type="match status" value="1"/>
</dbReference>
<dbReference type="SUPFAM" id="SSF51735">
    <property type="entry name" value="NAD(P)-binding Rossmann-fold domains"/>
    <property type="match status" value="1"/>
</dbReference>
<feature type="chain" id="PRO_0000201707" description="GDP-mannose 4,6 dehydratase">
    <location>
        <begin position="1"/>
        <end position="395"/>
    </location>
</feature>
<feature type="region of interest" description="Disordered" evidence="2">
    <location>
        <begin position="1"/>
        <end position="44"/>
    </location>
</feature>
<feature type="compositionally biased region" description="Polar residues" evidence="2">
    <location>
        <begin position="1"/>
        <end position="13"/>
    </location>
</feature>
<feature type="compositionally biased region" description="Polar residues" evidence="2">
    <location>
        <begin position="24"/>
        <end position="36"/>
    </location>
</feature>
<feature type="active site" evidence="1">
    <location>
        <position position="178"/>
    </location>
</feature>
<feature type="active site" description="Nucleophile" evidence="1">
    <location>
        <position position="180"/>
    </location>
</feature>
<feature type="active site" description="Nucleophile" evidence="1">
    <location>
        <position position="202"/>
    </location>
</feature>
<feature type="binding site" evidence="1">
    <location>
        <begin position="53"/>
        <end position="58"/>
    </location>
    <ligand>
        <name>NADP(+)</name>
        <dbReference type="ChEBI" id="CHEBI:58349"/>
    </ligand>
</feature>
<feature type="binding site" evidence="1">
    <location>
        <begin position="109"/>
        <end position="110"/>
    </location>
    <ligand>
        <name>NADP(+)</name>
        <dbReference type="ChEBI" id="CHEBI:58349"/>
    </ligand>
</feature>
<feature type="binding site" evidence="1">
    <location>
        <begin position="131"/>
        <end position="135"/>
    </location>
    <ligand>
        <name>NADP(+)</name>
        <dbReference type="ChEBI" id="CHEBI:58349"/>
    </ligand>
</feature>
<feature type="binding site" evidence="1">
    <location>
        <position position="146"/>
    </location>
    <ligand>
        <name>NADP(+)</name>
        <dbReference type="ChEBI" id="CHEBI:58349"/>
    </ligand>
</feature>
<feature type="binding site" evidence="1">
    <location>
        <position position="206"/>
    </location>
    <ligand>
        <name>NADP(+)</name>
        <dbReference type="ChEBI" id="CHEBI:58349"/>
    </ligand>
</feature>
<feature type="binding site" evidence="1">
    <location>
        <position position="232"/>
    </location>
    <ligand>
        <name>NADP(+)</name>
        <dbReference type="ChEBI" id="CHEBI:58349"/>
    </ligand>
</feature>
<feature type="binding site" evidence="1">
    <location>
        <position position="237"/>
    </location>
    <ligand>
        <name>NADP(+)</name>
        <dbReference type="ChEBI" id="CHEBI:58349"/>
    </ligand>
</feature>
<feature type="sequence conflict" description="In Ref. 1; CAJ77750 and 4; AAL90257." evidence="5" ref="1 4">
    <original>N</original>
    <variation>S</variation>
    <location>
        <position position="333"/>
    </location>
</feature>
<evidence type="ECO:0000250" key="1"/>
<evidence type="ECO:0000256" key="2">
    <source>
        <dbReference type="SAM" id="MobiDB-lite"/>
    </source>
</evidence>
<evidence type="ECO:0000269" key="3">
    <source>
    </source>
</evidence>
<evidence type="ECO:0000303" key="4">
    <source>
    </source>
</evidence>
<evidence type="ECO:0000305" key="5"/>
<evidence type="ECO:0000305" key="6">
    <source>
    </source>
</evidence>